<comment type="similarity">
    <text evidence="1">Belongs to the SUI1 family.</text>
</comment>
<reference key="1">
    <citation type="journal article" date="1995" name="DNA Res.">
        <title>Sequence analysis of the genome of the unicellular cyanobacterium Synechocystis sp. strain PCC6803. I. Sequence features in the 1 Mb region from map positions 64% to 92% of the genome.</title>
        <authorList>
            <person name="Kaneko T."/>
            <person name="Tanaka A."/>
            <person name="Sato S."/>
            <person name="Kotani H."/>
            <person name="Sazuka T."/>
            <person name="Miyajima N."/>
            <person name="Sugiura M."/>
            <person name="Tabata S."/>
        </authorList>
    </citation>
    <scope>NUCLEOTIDE SEQUENCE [LARGE SCALE GENOMIC DNA]</scope>
    <source>
        <strain>ATCC 27184 / PCC 6803 / N-1</strain>
    </source>
</reference>
<reference key="2">
    <citation type="journal article" date="1996" name="DNA Res.">
        <title>Sequence analysis of the genome of the unicellular cyanobacterium Synechocystis sp. strain PCC6803. II. Sequence determination of the entire genome and assignment of potential protein-coding regions.</title>
        <authorList>
            <person name="Kaneko T."/>
            <person name="Sato S."/>
            <person name="Kotani H."/>
            <person name="Tanaka A."/>
            <person name="Asamizu E."/>
            <person name="Nakamura Y."/>
            <person name="Miyajima N."/>
            <person name="Hirosawa M."/>
            <person name="Sugiura M."/>
            <person name="Sasamoto S."/>
            <person name="Kimura T."/>
            <person name="Hosouchi T."/>
            <person name="Matsuno A."/>
            <person name="Muraki A."/>
            <person name="Nakazaki N."/>
            <person name="Naruo K."/>
            <person name="Okumura S."/>
            <person name="Shimpo S."/>
            <person name="Takeuchi C."/>
            <person name="Wada T."/>
            <person name="Watanabe A."/>
            <person name="Yamada M."/>
            <person name="Yasuda M."/>
            <person name="Tabata S."/>
        </authorList>
    </citation>
    <scope>NUCLEOTIDE SEQUENCE [LARGE SCALE GENOMIC DNA]</scope>
    <source>
        <strain>ATCC 27184 / PCC 6803 / Kazusa</strain>
    </source>
</reference>
<organism>
    <name type="scientific">Synechocystis sp. (strain ATCC 27184 / PCC 6803 / Kazusa)</name>
    <dbReference type="NCBI Taxonomy" id="1111708"/>
    <lineage>
        <taxon>Bacteria</taxon>
        <taxon>Bacillati</taxon>
        <taxon>Cyanobacteriota</taxon>
        <taxon>Cyanophyceae</taxon>
        <taxon>Synechococcales</taxon>
        <taxon>Merismopediaceae</taxon>
        <taxon>Synechocystis</taxon>
    </lineage>
</organism>
<accession>Q55397</accession>
<feature type="chain" id="PRO_0000130599" description="Uncharacterized protein sll0546">
    <location>
        <begin position="1"/>
        <end position="111"/>
    </location>
</feature>
<gene>
    <name type="ordered locus">sll0546</name>
</gene>
<dbReference type="EMBL" id="BA000022">
    <property type="protein sequence ID" value="BAA10487.1"/>
    <property type="molecule type" value="Genomic_DNA"/>
</dbReference>
<dbReference type="PIR" id="S75752">
    <property type="entry name" value="S75752"/>
</dbReference>
<dbReference type="SMR" id="Q55397"/>
<dbReference type="STRING" id="1148.gene:10499991"/>
<dbReference type="PaxDb" id="1148-1001246"/>
<dbReference type="EnsemblBacteria" id="BAA10487">
    <property type="protein sequence ID" value="BAA10487"/>
    <property type="gene ID" value="BAA10487"/>
</dbReference>
<dbReference type="KEGG" id="syn:sll0546"/>
<dbReference type="eggNOG" id="COG0023">
    <property type="taxonomic scope" value="Bacteria"/>
</dbReference>
<dbReference type="InParanoid" id="Q55397"/>
<dbReference type="PhylomeDB" id="Q55397"/>
<dbReference type="Proteomes" id="UP000001425">
    <property type="component" value="Chromosome"/>
</dbReference>
<dbReference type="GO" id="GO:0003743">
    <property type="term" value="F:translation initiation factor activity"/>
    <property type="evidence" value="ECO:0007669"/>
    <property type="project" value="InterPro"/>
</dbReference>
<dbReference type="GO" id="GO:0001731">
    <property type="term" value="P:formation of translation preinitiation complex"/>
    <property type="evidence" value="ECO:0000318"/>
    <property type="project" value="GO_Central"/>
</dbReference>
<dbReference type="GO" id="GO:0006417">
    <property type="term" value="P:regulation of translation"/>
    <property type="evidence" value="ECO:0007669"/>
    <property type="project" value="UniProtKB-KW"/>
</dbReference>
<dbReference type="GO" id="GO:0002188">
    <property type="term" value="P:translation reinitiation"/>
    <property type="evidence" value="ECO:0000318"/>
    <property type="project" value="GO_Central"/>
</dbReference>
<dbReference type="CDD" id="cd11567">
    <property type="entry name" value="YciH_like"/>
    <property type="match status" value="1"/>
</dbReference>
<dbReference type="Gene3D" id="3.30.780.10">
    <property type="entry name" value="SUI1-like domain"/>
    <property type="match status" value="1"/>
</dbReference>
<dbReference type="InterPro" id="IPR050318">
    <property type="entry name" value="DENR/SUI1_TIF"/>
</dbReference>
<dbReference type="InterPro" id="IPR001950">
    <property type="entry name" value="SUI1"/>
</dbReference>
<dbReference type="InterPro" id="IPR005872">
    <property type="entry name" value="SUI1_arc_bac"/>
</dbReference>
<dbReference type="InterPro" id="IPR036877">
    <property type="entry name" value="SUI1_dom_sf"/>
</dbReference>
<dbReference type="NCBIfam" id="NF005669">
    <property type="entry name" value="PRK07451.1"/>
    <property type="match status" value="1"/>
</dbReference>
<dbReference type="NCBIfam" id="TIGR01158">
    <property type="entry name" value="SUI1_rel"/>
    <property type="match status" value="1"/>
</dbReference>
<dbReference type="PANTHER" id="PTHR12789:SF0">
    <property type="entry name" value="DENSITY-REGULATED PROTEIN"/>
    <property type="match status" value="1"/>
</dbReference>
<dbReference type="PANTHER" id="PTHR12789">
    <property type="entry name" value="DENSITY-REGULATED PROTEIN HOMOLOG"/>
    <property type="match status" value="1"/>
</dbReference>
<dbReference type="Pfam" id="PF01253">
    <property type="entry name" value="SUI1"/>
    <property type="match status" value="1"/>
</dbReference>
<dbReference type="PIRSF" id="PIRSF037511">
    <property type="entry name" value="Transl_init_SUI1_pro"/>
    <property type="match status" value="1"/>
</dbReference>
<dbReference type="SUPFAM" id="SSF55159">
    <property type="entry name" value="eIF1-like"/>
    <property type="match status" value="1"/>
</dbReference>
<dbReference type="PROSITE" id="PS50296">
    <property type="entry name" value="SUI1"/>
    <property type="match status" value="1"/>
</dbReference>
<sequence length="111" mass="11933">MASSKPPARIVYQEFGPVADPLSEEQIDLPPQQQNVRIQATRSGRKGKTVTVVSGLQLSAMGQQALLKALKSFCGSGGTLKEDCVEIQGDQREKILAYLLKQGYKAKISGG</sequence>
<protein>
    <recommendedName>
        <fullName>Uncharacterized protein sll0546</fullName>
    </recommendedName>
</protein>
<name>Y546_SYNY3</name>
<keyword id="KW-0648">Protein biosynthesis</keyword>
<keyword id="KW-1185">Reference proteome</keyword>
<keyword id="KW-0810">Translation regulation</keyword>
<proteinExistence type="inferred from homology"/>
<evidence type="ECO:0000305" key="1"/>